<organism>
    <name type="scientific">Zea mays</name>
    <name type="common">Maize</name>
    <dbReference type="NCBI Taxonomy" id="4577"/>
    <lineage>
        <taxon>Eukaryota</taxon>
        <taxon>Viridiplantae</taxon>
        <taxon>Streptophyta</taxon>
        <taxon>Embryophyta</taxon>
        <taxon>Tracheophyta</taxon>
        <taxon>Spermatophyta</taxon>
        <taxon>Magnoliopsida</taxon>
        <taxon>Liliopsida</taxon>
        <taxon>Poales</taxon>
        <taxon>Poaceae</taxon>
        <taxon>PACMAD clade</taxon>
        <taxon>Panicoideae</taxon>
        <taxon>Andropogonodae</taxon>
        <taxon>Andropogoneae</taxon>
        <taxon>Tripsacinae</taxon>
        <taxon>Zea</taxon>
    </lineage>
</organism>
<accession>P11155</accession>
<accession>C5IHE0</accession>
<accession>Q41846</accession>
<accession>Q41847</accession>
<accession>Q42367</accession>
<accession>Q7DMU6</accession>
<accession>Q9XGW9</accession>
<evidence type="ECO:0000256" key="1">
    <source>
        <dbReference type="SAM" id="MobiDB-lite"/>
    </source>
</evidence>
<evidence type="ECO:0000269" key="2">
    <source>
    </source>
</evidence>
<evidence type="ECO:0000269" key="3">
    <source>
    </source>
</evidence>
<evidence type="ECO:0000269" key="4">
    <source>
    </source>
</evidence>
<evidence type="ECO:0000269" key="5">
    <source>
    </source>
</evidence>
<evidence type="ECO:0000269" key="6">
    <source>
    </source>
</evidence>
<evidence type="ECO:0000269" key="7">
    <source>
    </source>
</evidence>
<evidence type="ECO:0000269" key="8">
    <source>
    </source>
</evidence>
<evidence type="ECO:0000269" key="9">
    <source>
    </source>
</evidence>
<evidence type="ECO:0000269" key="10">
    <source>
    </source>
</evidence>
<evidence type="ECO:0000269" key="11">
    <source>
    </source>
</evidence>
<evidence type="ECO:0000269" key="12">
    <source>
    </source>
</evidence>
<evidence type="ECO:0000303" key="13">
    <source>
    </source>
</evidence>
<evidence type="ECO:0000303" key="14">
    <source>
    </source>
</evidence>
<evidence type="ECO:0000303" key="15">
    <source>
    </source>
</evidence>
<evidence type="ECO:0000305" key="16"/>
<evidence type="ECO:0000305" key="17">
    <source>
    </source>
</evidence>
<evidence type="ECO:0000305" key="18">
    <source>
    </source>
</evidence>
<evidence type="ECO:0007829" key="19">
    <source>
        <dbReference type="PDB" id="1VBG"/>
    </source>
</evidence>
<evidence type="ECO:0007829" key="20">
    <source>
        <dbReference type="PDB" id="1VBH"/>
    </source>
</evidence>
<name>PPDK1_MAIZE</name>
<proteinExistence type="evidence at protein level"/>
<reference key="1">
    <citation type="journal article" date="1988" name="J. Biol. Chem.">
        <title>Primary structure of maize pyruvate, orthophosphate dikinase as deduced from cDNA sequence.</title>
        <authorList>
            <person name="Matsuoka M."/>
            <person name="Ozeki Y."/>
            <person name="Yamamoto N."/>
            <person name="Hirano H."/>
            <person name="Kano-Murakami Y."/>
            <person name="Tanaka Y."/>
        </authorList>
    </citation>
    <scope>NUCLEOTIDE SEQUENCE [MRNA] (ISOFORM C4PPDKZM1)</scope>
    <scope>PROTEIN SEQUENCE OF 71-89</scope>
</reference>
<reference key="2">
    <citation type="journal article" date="1990" name="J. Biol. Chem.">
        <title>Structure, genetic mapping, and expression of the gene for pyruvate, orthophosphate dikinase from maize.</title>
        <authorList>
            <person name="Matsuoka M."/>
        </authorList>
    </citation>
    <scope>NUCLEOTIDE SEQUENCE [GENOMIC DNA]</scope>
</reference>
<reference key="3">
    <citation type="journal article" date="2009" name="Plant Physiol.">
        <title>Epistatic interactions between Opaque2 transcriptional activator and its target gene CyPPDK1 control kernel trait variation in maize.</title>
        <authorList>
            <person name="Manicacci D."/>
            <person name="Camus-Kulandaivelu L."/>
            <person name="Fourmann M."/>
            <person name="Arar C."/>
            <person name="Barrault S."/>
            <person name="Rousselet A."/>
            <person name="Feminias N."/>
            <person name="Consoli L."/>
            <person name="Frances L."/>
            <person name="Mechin V."/>
            <person name="Murigneux A."/>
            <person name="Prioul J.L."/>
            <person name="Charcosset A."/>
            <person name="Damerval C."/>
        </authorList>
    </citation>
    <scope>NUCLEOTIDE SEQUENCE [GENOMIC DNA] (ISOFORM CYPPDKZM1)</scope>
    <source>
        <strain>cv. LH52</strain>
    </source>
</reference>
<reference key="4">
    <citation type="journal article" date="1990" name="Proc. Natl. Acad. Sci. U.S.A.">
        <title>Organ-specific transcripts of different size and abundance derive from the same pyruvate, orthophosphate dikinase gene in maize.</title>
        <authorList>
            <person name="Glackin C.A."/>
            <person name="Grula J.W."/>
        </authorList>
    </citation>
    <scope>NUCLEOTIDE SEQUENCE [MRNA] OF 1-75 (ISOFORM C4PPDKZM1)</scope>
    <scope>ALTERNATIVE PROMOTER USAGE</scope>
    <scope>TISSUE SPECIFICITY</scope>
    <source>
        <strain>cv. B73</strain>
    </source>
</reference>
<reference key="5">
    <citation type="journal article" date="1988" name="J. Biol. Chem.">
        <title>Sequence of the phosphothreonyl regulatory site peptide from inactive maize leaf pyruvate, orthophosphate dikinase.</title>
        <authorList>
            <person name="Roeske C.A."/>
            <person name="Kutny R.M."/>
            <person name="Budde R.J.A."/>
            <person name="Chollet R."/>
        </authorList>
    </citation>
    <scope>PROTEIN SEQUENCE OF 521-535</scope>
    <scope>PHOSPHORYLATION AT THR-527</scope>
</reference>
<reference key="6">
    <citation type="journal article" date="2012" name="Proteomics">
        <title>Differential phosphorylation of thylakoid proteins in mesophyll and bundle sheath chloroplasts from maize plants grown under low or high light.</title>
        <authorList>
            <person name="Fristedt R."/>
            <person name="Wasilewska W."/>
            <person name="Romanowska E."/>
            <person name="Vener A.V."/>
        </authorList>
    </citation>
    <scope>PROTEIN SEQUENCE OF 524-535</scope>
    <scope>SUBCELLULAR LOCATION</scope>
    <scope>PHOSPHORYLATION AT THR-527</scope>
    <source>
        <strain>cv. Olenka</strain>
        <tissue>Bundle sheath cell</tissue>
        <tissue>Mesophyll cell</tissue>
    </source>
</reference>
<reference key="7">
    <citation type="journal article" date="1991" name="Plant Cell">
        <title>Molecular mechanisms underlying the differential expression of maize pyruvate, orthophosphate dikinase genes.</title>
        <authorList>
            <person name="Sheen J."/>
        </authorList>
    </citation>
    <scope>PARTIAL NUCLEOTIDE SEQUENCE [MRNA] (ISOFORMS C4PPDKZM1 AND CYPPDKZM1)</scope>
    <scope>MUTAGENESIS OF GLY-525 AND SER-528</scope>
    <scope>ALTERNATIVE PROMOTER USAGE</scope>
    <scope>FUNCTION</scope>
    <scope>TISSUE SPECIFICITY</scope>
    <scope>SUBCELLULAR LOCATION</scope>
    <scope>DEVELOPMENTAL STAGE</scope>
    <scope>INDUCTION</scope>
</reference>
<reference key="8">
    <citation type="submission" date="1999-05" db="EMBL/GenBank/DDBJ databases">
        <title>Maize clones with putative DNA-binding activity.</title>
        <authorList>
            <person name="Stapleton A.E."/>
            <person name="Walbot V."/>
        </authorList>
    </citation>
    <scope>NUCLEOTIDE SEQUENCE [MRNA] OF 868-947</scope>
    <source>
        <strain>cv. B73</strain>
    </source>
</reference>
<reference key="9">
    <citation type="journal article" date="2014" name="Plant Physiol.">
        <title>Posttranslational modification of maize chloroplast pyruvate orthophosphate dikinase reveals the precise regulatory mechanism of its enzymatic activity.</title>
        <authorList>
            <person name="Chen Y.B."/>
            <person name="Lu T.C."/>
            <person name="Wang H.X."/>
            <person name="Shen J."/>
            <person name="Bu T.T."/>
            <person name="Chao Q."/>
            <person name="Gao Z.F."/>
            <person name="Zhu X.G."/>
            <person name="Wang Y.F."/>
            <person name="Wang B.C."/>
        </authorList>
    </citation>
    <scope>PROTEIN SEQUENCE OF 63-74</scope>
    <scope>IDENTIFICATION BY MASS SPECTROMETRY</scope>
    <scope>PHOSPHORYLATION AT THR-309; SER-506; THR-527 AND SER-528</scope>
    <scope>TISSUE SPECIFICITY</scope>
    <scope>INDUCTION BY LIGHT</scope>
    <scope>ACETYLATION AT ALA-63</scope>
    <scope>CLEAVAGE OF INITIATOR METHIONINE (ISOFORM CYPPDKZM1)</scope>
</reference>
<reference key="10">
    <citation type="journal article" date="1978" name="Plant Physiol.">
        <title>Cold lability of pyruvate, orthophosphate dikinase in the Maize Leaf.</title>
        <authorList>
            <person name="Shirahashi K."/>
            <person name="Hayakawa S."/>
            <person name="Sugiyama T."/>
        </authorList>
    </citation>
    <scope>ACTIVITY REGULATION</scope>
</reference>
<reference key="11">
    <citation type="journal article" date="1997" name="FEBS Lett.">
        <title>Identification of the amino acid residues responsible for cold tolerance in Flaveria brownii pyruvate,orthophosphate dikinase.</title>
        <authorList>
            <person name="Ohta S."/>
            <person name="Usami S."/>
            <person name="Ueki J."/>
            <person name="Kumashiro T."/>
            <person name="Komari T."/>
            <person name="Burnell J.N."/>
        </authorList>
    </citation>
    <scope>CATALYTIC ACTIVITY</scope>
    <scope>BIOPHYSICOCHEMICAL PROPERTIES</scope>
    <scope>ACTIVITY REGULATION</scope>
    <scope>MUTAGENESIS OF LEU-946</scope>
</reference>
<reference key="12">
    <citation type="journal article" date="1997" name="FEBS Lett.">
        <title>Site-directed mutagenesis of maize recombinant C4-pyruvate,orthophosphate dikinase at the phosphorylatable target threonine residue.</title>
        <authorList>
            <person name="Chastain C.J."/>
            <person name="Lee M.E."/>
            <person name="Moorman M.A."/>
            <person name="Shameekumar P."/>
            <person name="Chollet R."/>
        </authorList>
    </citation>
    <scope>CATALYTIC ACTIVITY</scope>
    <scope>MUTAGENESIS OF THR-527</scope>
    <scope>COFACTOR</scope>
</reference>
<reference key="13">
    <citation type="journal article" date="2000" name="Arch. Biochem. Biophys.">
        <title>Further analysis of maize C(4) pyruvate,orthophosphate dikinase phosphorylation by its bifunctional regulatory protein using selective substitutions of the regulatory Thr-456 and catalytic His-458 residues.</title>
        <authorList>
            <person name="Chastain C.J."/>
            <person name="Botschner M."/>
            <person name="Harrington G.E."/>
            <person name="Thompson B.J."/>
            <person name="Mills S.E."/>
            <person name="Sarath G."/>
            <person name="Chollet R."/>
        </authorList>
    </citation>
    <scope>CATALYTIC ACTIVITY</scope>
    <scope>ACTIVITY REGULATION</scope>
    <scope>ACTIVE SITE HIS-529</scope>
    <scope>MUTAGENESIS OF THR-527 AND HIS-529</scope>
</reference>
<reference key="14">
    <citation type="journal article" date="2011" name="J. Exp. Bot.">
        <title>Functional evolution of C(4) pyruvate, orthophosphate dikinase.</title>
        <authorList>
            <person name="Chastain C.J."/>
            <person name="Failing C.J."/>
            <person name="Manandhar L."/>
            <person name="Zimmerman M.A."/>
            <person name="Lakner M.M."/>
            <person name="Nguyen T.H."/>
        </authorList>
    </citation>
    <scope>FUNCTION</scope>
    <scope>CATALYTIC ACTIVITY</scope>
    <scope>BIOPHYSICOCHEMICAL PROPERTIES</scope>
</reference>
<reference key="15">
    <citation type="journal article" date="2005" name="Biochemistry">
        <title>Crystal structures of pyruvate phosphate dikinase from maize revealed an alternative conformation in the swiveling-domain motion.</title>
        <authorList>
            <person name="Nakanishi T."/>
            <person name="Nakatsu T."/>
            <person name="Matsuoka M."/>
            <person name="Sakata K."/>
            <person name="Kato H."/>
        </authorList>
    </citation>
    <scope>X-RAY CRYSTALLOGRAPHY (2.3 ANGSTROMS) OF 72-947 IN APOPROTEIN AND IN COMPLEX WITH SUBSTRATE</scope>
    <scope>ACTIVE SITE CYS-907</scope>
    <scope>METAL BINDING AT GLU-821 AND ASP-845</scope>
    <scope>SUBSTRATE BINDING AT ARG-635; ARG-692; ASN-844 AND ASP-845</scope>
</reference>
<feature type="transit peptide" description="Chloroplast" evidence="9">
    <location>
        <begin position="1"/>
        <end position="62"/>
    </location>
</feature>
<feature type="chain" id="PRO_0000431714" description="Pyruvate, phosphate dikinase 1, chloroplastic">
    <location>
        <begin position="63"/>
        <end position="947"/>
    </location>
</feature>
<feature type="region of interest" description="Disordered" evidence="1">
    <location>
        <begin position="21"/>
        <end position="54"/>
    </location>
</feature>
<feature type="active site" description="Tele-phosphohistidine intermediate" evidence="2">
    <location>
        <position position="529"/>
    </location>
</feature>
<feature type="active site" description="Proton donor" evidence="17">
    <location>
        <position position="907"/>
    </location>
</feature>
<feature type="binding site" evidence="3">
    <location>
        <position position="635"/>
    </location>
    <ligand>
        <name>substrate</name>
    </ligand>
</feature>
<feature type="binding site" evidence="3">
    <location>
        <position position="692"/>
    </location>
    <ligand>
        <name>substrate</name>
    </ligand>
</feature>
<feature type="binding site" evidence="3">
    <location>
        <position position="821"/>
    </location>
    <ligand>
        <name>Mg(2+)</name>
        <dbReference type="ChEBI" id="CHEBI:18420"/>
    </ligand>
</feature>
<feature type="binding site" evidence="3">
    <location>
        <position position="821"/>
    </location>
    <ligand>
        <name>substrate</name>
    </ligand>
</feature>
<feature type="binding site" evidence="3">
    <location>
        <position position="842"/>
    </location>
    <ligand>
        <name>substrate</name>
    </ligand>
</feature>
<feature type="binding site" evidence="3">
    <location>
        <position position="843"/>
    </location>
    <ligand>
        <name>substrate</name>
    </ligand>
</feature>
<feature type="binding site" evidence="3">
    <location>
        <position position="844"/>
    </location>
    <ligand>
        <name>substrate</name>
    </ligand>
</feature>
<feature type="binding site" evidence="3">
    <location>
        <position position="845"/>
    </location>
    <ligand>
        <name>Mg(2+)</name>
        <dbReference type="ChEBI" id="CHEBI:18420"/>
    </ligand>
</feature>
<feature type="binding site" evidence="3">
    <location>
        <position position="845"/>
    </location>
    <ligand>
        <name>substrate</name>
    </ligand>
</feature>
<feature type="modified residue" description="N-acetylalanine; partial" evidence="9">
    <location>
        <position position="63"/>
    </location>
</feature>
<feature type="modified residue" description="Phosphothreonine" evidence="9">
    <location>
        <position position="309"/>
    </location>
</feature>
<feature type="modified residue" description="Phosphoserine" evidence="9">
    <location>
        <position position="506"/>
    </location>
</feature>
<feature type="modified residue" description="Phosphothreonine; by PDRP1" evidence="8 9 10">
    <location>
        <position position="527"/>
    </location>
</feature>
<feature type="modified residue" description="Phosphoserine; by PDRP1" evidence="9">
    <location>
        <position position="528"/>
    </location>
</feature>
<feature type="splice variant" id="VSP_057373" description="In isoform CYPPDKZM1.">
    <original>MAASVSRAICVQKPGSKCTRDREATSFARRSVAAPRPPHAKAAGVIRSDSGAGRGQHCSPLRAVVDAAPIQTTKK</original>
    <variation>MAPVQCARSQ</variation>
    <location>
        <begin position="1"/>
        <end position="75"/>
    </location>
</feature>
<feature type="mutagenesis site" description="Greatly reduced activity. Strongly reduced or lack of phosphorylation by PDRP1 in vitro." evidence="9">
    <original>G</original>
    <variation>A</variation>
    <variation>P</variation>
    <location>
        <position position="525"/>
    </location>
</feature>
<feature type="mutagenesis site" description="Abolished activity." evidence="2 12">
    <original>T</original>
    <variation>D</variation>
    <variation>E</variation>
    <location>
        <position position="527"/>
    </location>
</feature>
<feature type="mutagenesis site" description="Greatly reduced activity." evidence="2 12">
    <original>T</original>
    <variation>N</variation>
    <location>
        <position position="527"/>
    </location>
</feature>
<feature type="mutagenesis site" description="No effect on activity." evidence="2 12">
    <original>T</original>
    <variation>S</variation>
    <variation>V</variation>
    <location>
        <position position="527"/>
    </location>
</feature>
<feature type="mutagenesis site" description="Greatly reduced activity. No tyrosine phosphorylation by PDRP1 in vitro." evidence="2 12">
    <original>T</original>
    <variation>Y</variation>
    <location>
        <position position="527"/>
    </location>
</feature>
<feature type="mutagenesis site" description="No effect on activity or phosphorylation by PDRP1 in vitro." evidence="9">
    <original>S</original>
    <variation>C</variation>
    <location>
        <position position="528"/>
    </location>
</feature>
<feature type="mutagenesis site" description="Greatly reduced activity. Strongly reduced or lack of phosphorylation by PDRP1 in vitro." evidence="9">
    <original>S</original>
    <variation>Y</variation>
    <variation>T</variation>
    <location>
        <position position="528"/>
    </location>
</feature>
<feature type="mutagenesis site" description="Abolished activity. No phosphorylation on T-527 by PDRP1 in vitro." evidence="2">
    <original>H</original>
    <variation>N</variation>
    <location>
        <position position="529"/>
    </location>
</feature>
<feature type="mutagenesis site" description="No decrease of the cold sensitivity." evidence="11">
    <original>L</original>
    <variation>V</variation>
    <location>
        <position position="946"/>
    </location>
</feature>
<feature type="sequence conflict" description="In Ref. 2; AAA33498 and 7; AAB23730." evidence="16" ref="2 7">
    <original>A</original>
    <variation>T</variation>
    <location>
        <position position="2"/>
    </location>
</feature>
<feature type="sequence conflict" description="In Ref. 3; ACR78549." evidence="16" ref="3">
    <location>
        <position position="218"/>
    </location>
</feature>
<feature type="sequence conflict" description="In Ref. 3; ACR78549." evidence="16" ref="3">
    <original>R</original>
    <variation>G</variation>
    <location>
        <position position="404"/>
    </location>
</feature>
<feature type="sequence conflict" description="In Ref. 2; AAA33498 and 3; ACR78549." evidence="16" ref="2 3">
    <original>W</original>
    <variation>G</variation>
    <location>
        <position position="536"/>
    </location>
</feature>
<feature type="sequence conflict" description="In Ref. 2; AAA33498 and 3; ACR78549." evidence="16" ref="2 3">
    <original>S</original>
    <variation>G</variation>
    <location>
        <position position="561"/>
    </location>
</feature>
<feature type="sequence conflict" description="In Ref. 2; AAA33498 and 3; ACR78549." evidence="16" ref="2 3">
    <original>T</original>
    <variation>P</variation>
    <location>
        <position position="671"/>
    </location>
</feature>
<feature type="sequence conflict" description="In Ref. 2; AAA33498 and 3; ACR78549." evidence="16" ref="2 3">
    <original>HPSY</original>
    <variation>PPLH</variation>
    <location>
        <begin position="696"/>
        <end position="699"/>
    </location>
</feature>
<feature type="sequence conflict" description="In Ref. 3; ACR78549." evidence="16" ref="3">
    <original>A</original>
    <variation>V</variation>
    <location>
        <position position="760"/>
    </location>
</feature>
<feature type="sequence conflict" description="In Ref. 2; AAA33498 and 3; ACR78549." evidence="16" ref="2 3">
    <original>H</original>
    <variation>Y</variation>
    <location>
        <position position="865"/>
    </location>
</feature>
<feature type="sequence conflict" description="In Ref. 8; AAD45281." evidence="16" ref="8">
    <original>GILQH</original>
    <variation>EFGTS</variation>
    <location>
        <begin position="869"/>
        <end position="873"/>
    </location>
</feature>
<feature type="sequence conflict" description="In Ref. 3; ACR78549." evidence="16" ref="3">
    <original>V</original>
    <variation>I</variation>
    <location>
        <position position="878"/>
    </location>
</feature>
<feature type="sequence conflict" description="In Ref. 2; AAA33498 and 3; ACR78549." evidence="16" ref="2 3">
    <original>F</original>
    <variation>L</variation>
    <location>
        <position position="890"/>
    </location>
</feature>
<feature type="sequence conflict" description="In Ref. 2; AAA33498, 8; AAD45281 and 3; ACR78549." evidence="16" ref="2 8 3">
    <original>F</original>
    <variation>Y</variation>
    <location>
        <position position="927"/>
    </location>
</feature>
<feature type="strand" evidence="19">
    <location>
        <begin position="76"/>
        <end position="81"/>
    </location>
</feature>
<feature type="strand" evidence="19">
    <location>
        <begin position="84"/>
        <end position="87"/>
    </location>
</feature>
<feature type="turn" evidence="19">
    <location>
        <begin position="92"/>
        <end position="95"/>
    </location>
</feature>
<feature type="helix" evidence="19">
    <location>
        <begin position="96"/>
        <end position="107"/>
    </location>
</feature>
<feature type="strand" evidence="19">
    <location>
        <begin position="115"/>
        <end position="118"/>
    </location>
</feature>
<feature type="helix" evidence="19">
    <location>
        <begin position="120"/>
        <end position="128"/>
    </location>
</feature>
<feature type="strand" evidence="20">
    <location>
        <begin position="129"/>
        <end position="132"/>
    </location>
</feature>
<feature type="helix" evidence="19">
    <location>
        <begin position="137"/>
        <end position="152"/>
    </location>
</feature>
<feature type="strand" evidence="19">
    <location>
        <begin position="159"/>
        <end position="162"/>
    </location>
</feature>
<feature type="strand" evidence="19">
    <location>
        <begin position="165"/>
        <end position="168"/>
    </location>
</feature>
<feature type="strand" evidence="19">
    <location>
        <begin position="182"/>
        <end position="185"/>
    </location>
</feature>
<feature type="helix" evidence="19">
    <location>
        <begin position="189"/>
        <end position="199"/>
    </location>
</feature>
<feature type="helix" evidence="19">
    <location>
        <begin position="201"/>
        <end position="218"/>
    </location>
</feature>
<feature type="helix" evidence="19">
    <location>
        <begin position="224"/>
        <end position="238"/>
    </location>
</feature>
<feature type="helix" evidence="19">
    <location>
        <begin position="243"/>
        <end position="245"/>
    </location>
</feature>
<feature type="helix" evidence="19">
    <location>
        <begin position="248"/>
        <end position="266"/>
    </location>
</feature>
<feature type="helix" evidence="19">
    <location>
        <begin position="274"/>
        <end position="288"/>
    </location>
</feature>
<feature type="helix" evidence="19">
    <location>
        <begin position="292"/>
        <end position="299"/>
    </location>
</feature>
<feature type="turn" evidence="19">
    <location>
        <begin position="300"/>
        <end position="302"/>
    </location>
</feature>
<feature type="strand" evidence="19">
    <location>
        <begin position="311"/>
        <end position="315"/>
    </location>
</feature>
<feature type="strand" evidence="19">
    <location>
        <begin position="326"/>
        <end position="333"/>
    </location>
</feature>
<feature type="turn" evidence="19">
    <location>
        <begin position="335"/>
        <end position="337"/>
    </location>
</feature>
<feature type="strand" evidence="19">
    <location>
        <begin position="343"/>
        <end position="350"/>
    </location>
</feature>
<feature type="helix" evidence="19">
    <location>
        <begin position="352"/>
        <end position="357"/>
    </location>
</feature>
<feature type="helix" evidence="19">
    <location>
        <begin position="366"/>
        <end position="371"/>
    </location>
</feature>
<feature type="helix" evidence="19">
    <location>
        <begin position="373"/>
        <end position="390"/>
    </location>
</feature>
<feature type="strand" evidence="19">
    <location>
        <begin position="394"/>
        <end position="401"/>
    </location>
</feature>
<feature type="strand" evidence="19">
    <location>
        <begin position="404"/>
        <end position="412"/>
    </location>
</feature>
<feature type="helix" evidence="19">
    <location>
        <begin position="417"/>
        <end position="429"/>
    </location>
</feature>
<feature type="helix" evidence="19">
    <location>
        <begin position="435"/>
        <end position="438"/>
    </location>
</feature>
<feature type="helix" evidence="19">
    <location>
        <begin position="439"/>
        <end position="441"/>
    </location>
</feature>
<feature type="helix" evidence="19">
    <location>
        <begin position="444"/>
        <end position="449"/>
    </location>
</feature>
<feature type="helix" evidence="19">
    <location>
        <begin position="458"/>
        <end position="461"/>
    </location>
</feature>
<feature type="turn" evidence="19">
    <location>
        <begin position="462"/>
        <end position="464"/>
    </location>
</feature>
<feature type="strand" evidence="19">
    <location>
        <begin position="465"/>
        <end position="468"/>
    </location>
</feature>
<feature type="strand" evidence="19">
    <location>
        <begin position="470"/>
        <end position="473"/>
    </location>
</feature>
<feature type="strand" evidence="19">
    <location>
        <begin position="475"/>
        <end position="484"/>
    </location>
</feature>
<feature type="helix" evidence="19">
    <location>
        <begin position="485"/>
        <end position="493"/>
    </location>
</feature>
<feature type="strand" evidence="19">
    <location>
        <begin position="498"/>
        <end position="503"/>
    </location>
</feature>
<feature type="turn" evidence="20">
    <location>
        <begin position="507"/>
        <end position="509"/>
    </location>
</feature>
<feature type="helix" evidence="19">
    <location>
        <begin position="510"/>
        <end position="515"/>
    </location>
</feature>
<feature type="strand" evidence="19">
    <location>
        <begin position="516"/>
        <end position="523"/>
    </location>
</feature>
<feature type="helix" evidence="19">
    <location>
        <begin position="529"/>
        <end position="536"/>
    </location>
</feature>
<feature type="strand" evidence="19">
    <location>
        <begin position="541"/>
        <end position="543"/>
    </location>
</feature>
<feature type="strand" evidence="19">
    <location>
        <begin position="548"/>
        <end position="551"/>
    </location>
</feature>
<feature type="turn" evidence="19">
    <location>
        <begin position="552"/>
        <end position="555"/>
    </location>
</feature>
<feature type="strand" evidence="19">
    <location>
        <begin position="556"/>
        <end position="559"/>
    </location>
</feature>
<feature type="strand" evidence="19">
    <location>
        <begin position="562"/>
        <end position="565"/>
    </location>
</feature>
<feature type="strand" evidence="19">
    <location>
        <begin position="569"/>
        <end position="573"/>
    </location>
</feature>
<feature type="turn" evidence="19">
    <location>
        <begin position="574"/>
        <end position="577"/>
    </location>
</feature>
<feature type="strand" evidence="19">
    <location>
        <begin position="578"/>
        <end position="582"/>
    </location>
</feature>
<feature type="helix" evidence="19">
    <location>
        <begin position="594"/>
        <end position="605"/>
    </location>
</feature>
<feature type="strand" evidence="19">
    <location>
        <begin position="608"/>
        <end position="613"/>
    </location>
</feature>
<feature type="helix" evidence="19">
    <location>
        <begin position="617"/>
        <end position="625"/>
    </location>
</feature>
<feature type="strand" evidence="19">
    <location>
        <begin position="630"/>
        <end position="635"/>
    </location>
</feature>
<feature type="helix" evidence="19">
    <location>
        <begin position="636"/>
        <end position="640"/>
    </location>
</feature>
<feature type="helix" evidence="19">
    <location>
        <begin position="644"/>
        <end position="655"/>
    </location>
</feature>
<feature type="helix" evidence="19">
    <location>
        <begin position="659"/>
        <end position="683"/>
    </location>
</feature>
<feature type="turn" evidence="19">
    <location>
        <begin position="684"/>
        <end position="686"/>
    </location>
</feature>
<feature type="strand" evidence="19">
    <location>
        <begin position="687"/>
        <end position="692"/>
    </location>
</feature>
<feature type="helix" evidence="19">
    <location>
        <begin position="698"/>
        <end position="701"/>
    </location>
</feature>
<feature type="helix" evidence="19">
    <location>
        <begin position="707"/>
        <end position="718"/>
    </location>
</feature>
<feature type="helix" evidence="19">
    <location>
        <begin position="722"/>
        <end position="732"/>
    </location>
</feature>
<feature type="helix" evidence="19">
    <location>
        <begin position="737"/>
        <end position="739"/>
    </location>
</feature>
<feature type="helix" evidence="19">
    <location>
        <begin position="744"/>
        <end position="749"/>
    </location>
</feature>
<feature type="helix" evidence="19">
    <location>
        <begin position="751"/>
        <end position="769"/>
    </location>
</feature>
<feature type="turn" evidence="19">
    <location>
        <begin position="770"/>
        <end position="772"/>
    </location>
</feature>
<feature type="strand" evidence="19">
    <location>
        <begin position="776"/>
        <end position="781"/>
    </location>
</feature>
<feature type="helix" evidence="19">
    <location>
        <begin position="787"/>
        <end position="808"/>
    </location>
</feature>
<feature type="strand" evidence="19">
    <location>
        <begin position="815"/>
        <end position="820"/>
    </location>
</feature>
<feature type="helix" evidence="19">
    <location>
        <begin position="823"/>
        <end position="827"/>
    </location>
</feature>
<feature type="helix" evidence="19">
    <location>
        <begin position="829"/>
        <end position="832"/>
    </location>
</feature>
<feature type="turn" evidence="19">
    <location>
        <begin position="833"/>
        <end position="835"/>
    </location>
</feature>
<feature type="strand" evidence="19">
    <location>
        <begin position="837"/>
        <end position="841"/>
    </location>
</feature>
<feature type="helix" evidence="19">
    <location>
        <begin position="843"/>
        <end position="851"/>
    </location>
</feature>
<feature type="turn" evidence="19">
    <location>
        <begin position="855"/>
        <end position="857"/>
    </location>
</feature>
<feature type="helix" evidence="19">
    <location>
        <begin position="858"/>
        <end position="860"/>
    </location>
</feature>
<feature type="helix" evidence="19">
    <location>
        <begin position="862"/>
        <end position="867"/>
    </location>
</feature>
<feature type="turn" evidence="19">
    <location>
        <begin position="875"/>
        <end position="877"/>
    </location>
</feature>
<feature type="turn" evidence="19">
    <location>
        <begin position="881"/>
        <end position="883"/>
    </location>
</feature>
<feature type="helix" evidence="19">
    <location>
        <begin position="884"/>
        <end position="898"/>
    </location>
</feature>
<feature type="strand" evidence="19">
    <location>
        <begin position="903"/>
        <end position="908"/>
    </location>
</feature>
<feature type="helix" evidence="19">
    <location>
        <begin position="909"/>
        <end position="912"/>
    </location>
</feature>
<feature type="helix" evidence="19">
    <location>
        <begin position="914"/>
        <end position="922"/>
    </location>
</feature>
<feature type="strand" evidence="19">
    <location>
        <begin position="926"/>
        <end position="930"/>
    </location>
</feature>
<feature type="helix" evidence="19">
    <location>
        <begin position="932"/>
        <end position="934"/>
    </location>
</feature>
<feature type="helix" evidence="19">
    <location>
        <begin position="935"/>
        <end position="944"/>
    </location>
</feature>
<keyword id="KW-0002">3D-structure</keyword>
<keyword id="KW-0007">Acetylation</keyword>
<keyword id="KW-0877">Alternative promoter usage</keyword>
<keyword id="KW-0067">ATP-binding</keyword>
<keyword id="KW-0150">Chloroplast</keyword>
<keyword id="KW-0963">Cytoplasm</keyword>
<keyword id="KW-0903">Direct protein sequencing</keyword>
<keyword id="KW-0418">Kinase</keyword>
<keyword id="KW-0460">Magnesium</keyword>
<keyword id="KW-0479">Metal-binding</keyword>
<keyword id="KW-0547">Nucleotide-binding</keyword>
<keyword id="KW-0597">Phosphoprotein</keyword>
<keyword id="KW-0602">Photosynthesis</keyword>
<keyword id="KW-0934">Plastid</keyword>
<keyword id="KW-1185">Reference proteome</keyword>
<keyword id="KW-0808">Transferase</keyword>
<keyword id="KW-0809">Transit peptide</keyword>
<dbReference type="EC" id="2.7.9.1" evidence="2 6 11 12"/>
<dbReference type="EMBL" id="J03901">
    <property type="protein sequence ID" value="AAA33495.1"/>
    <property type="status" value="ALT_FRAME"/>
    <property type="molecule type" value="mRNA"/>
</dbReference>
<dbReference type="EMBL" id="M58656">
    <property type="protein sequence ID" value="AAA33498.1"/>
    <property type="molecule type" value="Genomic_DNA"/>
</dbReference>
<dbReference type="EMBL" id="M58655">
    <property type="protein sequence ID" value="AAA33498.1"/>
    <property type="status" value="JOINED"/>
    <property type="molecule type" value="Genomic_DNA"/>
</dbReference>
<dbReference type="EMBL" id="S46966">
    <property type="protein sequence ID" value="AAB23731.1"/>
    <property type="molecule type" value="Genomic_DNA"/>
</dbReference>
<dbReference type="EMBL" id="S46965">
    <property type="protein sequence ID" value="AAB23730.1"/>
    <property type="molecule type" value="Genomic_DNA"/>
</dbReference>
<dbReference type="EMBL" id="S46964">
    <property type="protein sequence ID" value="AAB23730.1"/>
    <property type="status" value="JOINED"/>
    <property type="molecule type" value="Genomic_DNA"/>
</dbReference>
<dbReference type="EMBL" id="X14927">
    <property type="protein sequence ID" value="CAA33054.1"/>
    <property type="molecule type" value="Genomic_DNA"/>
</dbReference>
<dbReference type="EMBL" id="FJ935764">
    <property type="protein sequence ID" value="ACR78549.1"/>
    <property type="molecule type" value="Genomic_DNA"/>
</dbReference>
<dbReference type="EMBL" id="AF152599">
    <property type="protein sequence ID" value="AAD45281.1"/>
    <property type="molecule type" value="mRNA"/>
</dbReference>
<dbReference type="PIR" id="A29225">
    <property type="entry name" value="KIZMPO"/>
</dbReference>
<dbReference type="PIR" id="PQ0190">
    <property type="entry name" value="PQ0190"/>
</dbReference>
<dbReference type="PDB" id="1VBG">
    <property type="method" value="X-ray"/>
    <property type="resolution" value="2.30 A"/>
    <property type="chains" value="A=72-947"/>
</dbReference>
<dbReference type="PDB" id="1VBH">
    <property type="method" value="X-ray"/>
    <property type="resolution" value="2.30 A"/>
    <property type="chains" value="A=72-947"/>
</dbReference>
<dbReference type="PDBsum" id="1VBG"/>
<dbReference type="PDBsum" id="1VBH"/>
<dbReference type="SMR" id="P11155"/>
<dbReference type="FunCoup" id="P11155">
    <property type="interactions" value="489"/>
</dbReference>
<dbReference type="STRING" id="4577.P11155"/>
<dbReference type="iPTMnet" id="P11155"/>
<dbReference type="MaizeGDB" id="25385"/>
<dbReference type="InParanoid" id="P11155"/>
<dbReference type="BRENDA" id="2.7.9.1">
    <property type="organism ID" value="6752"/>
</dbReference>
<dbReference type="SABIO-RK" id="P11155"/>
<dbReference type="UniPathway" id="UPA00322"/>
<dbReference type="EvolutionaryTrace" id="P11155"/>
<dbReference type="Proteomes" id="UP000007305">
    <property type="component" value="Unplaced"/>
</dbReference>
<dbReference type="ExpressionAtlas" id="P11155">
    <property type="expression patterns" value="baseline and differential"/>
</dbReference>
<dbReference type="GO" id="GO:0009507">
    <property type="term" value="C:chloroplast"/>
    <property type="evidence" value="ECO:0007669"/>
    <property type="project" value="UniProtKB-SubCell"/>
</dbReference>
<dbReference type="GO" id="GO:0005524">
    <property type="term" value="F:ATP binding"/>
    <property type="evidence" value="ECO:0007669"/>
    <property type="project" value="UniProtKB-KW"/>
</dbReference>
<dbReference type="GO" id="GO:0016301">
    <property type="term" value="F:kinase activity"/>
    <property type="evidence" value="ECO:0007669"/>
    <property type="project" value="UniProtKB-KW"/>
</dbReference>
<dbReference type="GO" id="GO:0046872">
    <property type="term" value="F:metal ion binding"/>
    <property type="evidence" value="ECO:0007669"/>
    <property type="project" value="UniProtKB-KW"/>
</dbReference>
<dbReference type="GO" id="GO:0050242">
    <property type="term" value="F:pyruvate, phosphate dikinase activity"/>
    <property type="evidence" value="ECO:0007669"/>
    <property type="project" value="UniProtKB-EC"/>
</dbReference>
<dbReference type="GO" id="GO:0015979">
    <property type="term" value="P:photosynthesis"/>
    <property type="evidence" value="ECO:0007669"/>
    <property type="project" value="UniProtKB-KW"/>
</dbReference>
<dbReference type="FunFam" id="3.20.20.60:FF:000040">
    <property type="entry name" value="Pyruvate, phosphate dikinase, chloroplastic"/>
    <property type="match status" value="1"/>
</dbReference>
<dbReference type="FunFam" id="3.30.470.20:FF:000038">
    <property type="entry name" value="Pyruvate, phosphate dikinase, chloroplastic"/>
    <property type="match status" value="1"/>
</dbReference>
<dbReference type="FunFam" id="3.50.30.10:FF:000009">
    <property type="entry name" value="Pyruvate, phosphate dikinase, chloroplastic"/>
    <property type="match status" value="1"/>
</dbReference>
<dbReference type="Gene3D" id="1.20.80.30">
    <property type="match status" value="1"/>
</dbReference>
<dbReference type="Gene3D" id="3.30.1490.20">
    <property type="entry name" value="ATP-grasp fold, A domain"/>
    <property type="match status" value="1"/>
</dbReference>
<dbReference type="Gene3D" id="3.30.470.20">
    <property type="entry name" value="ATP-grasp fold, B domain"/>
    <property type="match status" value="1"/>
</dbReference>
<dbReference type="Gene3D" id="3.20.20.60">
    <property type="entry name" value="Phosphoenolpyruvate-binding domains"/>
    <property type="match status" value="1"/>
</dbReference>
<dbReference type="Gene3D" id="3.50.30.10">
    <property type="entry name" value="Phosphohistidine domain"/>
    <property type="match status" value="1"/>
</dbReference>
<dbReference type="Gene3D" id="1.10.189.10">
    <property type="entry name" value="Pyruvate Phosphate Dikinase, domain 2"/>
    <property type="match status" value="1"/>
</dbReference>
<dbReference type="InterPro" id="IPR013815">
    <property type="entry name" value="ATP_grasp_subdomain_1"/>
</dbReference>
<dbReference type="InterPro" id="IPR008279">
    <property type="entry name" value="PEP-util_enz_mobile_dom"/>
</dbReference>
<dbReference type="InterPro" id="IPR018274">
    <property type="entry name" value="PEP_util_AS"/>
</dbReference>
<dbReference type="InterPro" id="IPR000121">
    <property type="entry name" value="PEP_util_C"/>
</dbReference>
<dbReference type="InterPro" id="IPR023151">
    <property type="entry name" value="PEP_util_CS"/>
</dbReference>
<dbReference type="InterPro" id="IPR036637">
    <property type="entry name" value="Phosphohistidine_dom_sf"/>
</dbReference>
<dbReference type="InterPro" id="IPR002192">
    <property type="entry name" value="PPDK_AMP/ATP-bd"/>
</dbReference>
<dbReference type="InterPro" id="IPR010121">
    <property type="entry name" value="Pyruvate_phosphate_dikinase"/>
</dbReference>
<dbReference type="InterPro" id="IPR015813">
    <property type="entry name" value="Pyrv/PenolPyrv_kinase-like_dom"/>
</dbReference>
<dbReference type="InterPro" id="IPR040442">
    <property type="entry name" value="Pyrv_kinase-like_dom_sf"/>
</dbReference>
<dbReference type="NCBIfam" id="NF004531">
    <property type="entry name" value="PRK05878.1"/>
    <property type="match status" value="1"/>
</dbReference>
<dbReference type="NCBIfam" id="TIGR01828">
    <property type="entry name" value="pyru_phos_dikin"/>
    <property type="match status" value="1"/>
</dbReference>
<dbReference type="PANTHER" id="PTHR22931">
    <property type="entry name" value="PHOSPHOENOLPYRUVATE DIKINASE-RELATED"/>
    <property type="match status" value="1"/>
</dbReference>
<dbReference type="PANTHER" id="PTHR22931:SF9">
    <property type="entry name" value="PYRUVATE, PHOSPHATE DIKINASE 1, CHLOROPLASTIC"/>
    <property type="match status" value="1"/>
</dbReference>
<dbReference type="Pfam" id="PF00391">
    <property type="entry name" value="PEP-utilizers"/>
    <property type="match status" value="1"/>
</dbReference>
<dbReference type="Pfam" id="PF02896">
    <property type="entry name" value="PEP-utilizers_C"/>
    <property type="match status" value="1"/>
</dbReference>
<dbReference type="Pfam" id="PF01326">
    <property type="entry name" value="PPDK_N"/>
    <property type="match status" value="3"/>
</dbReference>
<dbReference type="PIRSF" id="PIRSF000853">
    <property type="entry name" value="PPDK"/>
    <property type="match status" value="1"/>
</dbReference>
<dbReference type="SUPFAM" id="SSF56059">
    <property type="entry name" value="Glutathione synthetase ATP-binding domain-like"/>
    <property type="match status" value="1"/>
</dbReference>
<dbReference type="SUPFAM" id="SSF51621">
    <property type="entry name" value="Phosphoenolpyruvate/pyruvate domain"/>
    <property type="match status" value="1"/>
</dbReference>
<dbReference type="SUPFAM" id="SSF52009">
    <property type="entry name" value="Phosphohistidine domain"/>
    <property type="match status" value="1"/>
</dbReference>
<dbReference type="PROSITE" id="PS00742">
    <property type="entry name" value="PEP_ENZYMES_2"/>
    <property type="match status" value="1"/>
</dbReference>
<dbReference type="PROSITE" id="PS00370">
    <property type="entry name" value="PEP_ENZYMES_PHOS_SITE"/>
    <property type="match status" value="1"/>
</dbReference>
<comment type="function">
    <text evidence="5 6">Formation of phosphoenolpyruvate, which is the primary acceptor of CO(2) in C4 and some Crassulacean acid metabolism plants.</text>
</comment>
<comment type="catalytic activity">
    <reaction evidence="2 6 11">
        <text>pyruvate + phosphate + ATP = phosphoenolpyruvate + AMP + diphosphate + H(+)</text>
        <dbReference type="Rhea" id="RHEA:10756"/>
        <dbReference type="ChEBI" id="CHEBI:15361"/>
        <dbReference type="ChEBI" id="CHEBI:15378"/>
        <dbReference type="ChEBI" id="CHEBI:30616"/>
        <dbReference type="ChEBI" id="CHEBI:33019"/>
        <dbReference type="ChEBI" id="CHEBI:43474"/>
        <dbReference type="ChEBI" id="CHEBI:58702"/>
        <dbReference type="ChEBI" id="CHEBI:456215"/>
        <dbReference type="EC" id="2.7.9.1"/>
    </reaction>
</comment>
<comment type="cofactor">
    <cofactor evidence="3 18">
        <name>Mg(2+)</name>
        <dbReference type="ChEBI" id="CHEBI:18420"/>
    </cofactor>
</comment>
<comment type="activity regulation">
    <text evidence="2 4 9 11">Activated by light-induced dephosphorylation. Inhibited by dark-induced phosphorylation. Both reactions are catalyzed by PDRP1. Inactivated by cold due to the dissociation of the homotetramer. Independent of circadian regulation (PubMed:24710069).</text>
</comment>
<comment type="biophysicochemical properties">
    <kinetics>
        <KM evidence="11">158 uM for pyruvate</KM>
        <KM evidence="6">178 uM for pyruvate</KM>
        <KM evidence="11">95 uM for ATP</KM>
        <KM evidence="6">194 uM for phosphoenolpyruvate</KM>
        <KM evidence="11">408 uM for phosphate</KM>
    </kinetics>
    <temperatureDependence>
        <text evidence="11">Loss of activity below 10 degrees Celsius.</text>
    </temperatureDependence>
</comment>
<comment type="pathway">
    <text>Photosynthesis; C4 acid pathway.</text>
</comment>
<comment type="subunit">
    <text evidence="3">Homotetramer.</text>
</comment>
<comment type="subcellular location">
    <subcellularLocation>
        <location evidence="5 8">Plastid</location>
        <location evidence="5 8">Chloroplast</location>
    </subcellularLocation>
    <subcellularLocation>
        <location evidence="5">Cytoplasm</location>
    </subcellularLocation>
    <text>Isoform C4PPDKZM1 is targeted to the chloroplast while isoform CYPPDKZM1 is found in the cytoplasm. Can be found associated with the thylakoid membrane.</text>
</comment>
<comment type="alternative products">
    <event type="alternative promoter"/>
    <isoform>
        <id>P11155-1</id>
        <name evidence="13">C4PPDKZM1</name>
        <name evidence="15">C4PPDK</name>
        <sequence type="displayed"/>
    </isoform>
    <isoform>
        <id>P11155-2</id>
        <name evidence="13 15">CYPPDKZM1</name>
        <sequence type="described" ref="VSP_057373"/>
    </isoform>
</comment>
<comment type="tissue specificity">
    <text evidence="5 7 9">Isoform C4PPDKZM1 mainly localized in mesophyll cells and only a low level is found in bundle sheath cells. Isoform CYPPDKZM1 expressed in roots, stems and etiolated leaves.</text>
</comment>
<comment type="induction">
    <text evidence="5 9">Isoform C4ppdkZm1 is light-inducible.</text>
</comment>
<comment type="domain">
    <text>The N-terminal domain contains the ATP/Pi binding site, the central domain the pyrophosphate/phosphate carrier histidine, and the C-terminal domain the pyruvate binding site.</text>
</comment>
<comment type="PTM">
    <text evidence="8 9 10">Phosphorylation of Thr-527 in the dark inactivates the enzyme, dephosphorylation upon light stimulation reactivates the enzyme (PubMed:2834385). More highly phosphorylated when grown under high rather than low light regimes (70 vs 900 umol photons/m-2/s). the degree of phosphorylation is strictly regulated by light intensity and the light/dark transition has no influence (PubMed:24710069). Phosphorylated in both mesophyll and bundle sheath cells (PubMed:22833285). The phosphorylation at Ser-528 may be important for the phosphorylation at Thr-527 and may also be regulated by light intensity (PubMed:24710069).</text>
</comment>
<comment type="miscellaneous">
    <text>The reaction takes place in three steps, mediated by a phosphocarrier histidine residue located on the surface of the central domain. The two first partial reactions are catalyzed at an active site located on the N-terminal domain, and the third partial reaction is catalyzed at an active site located on the C-terminal domain. For catalytic turnover, the central domain swivels from the concave surface of the N-terminal domain to that of the C-terminal domain.</text>
</comment>
<comment type="miscellaneous">
    <text>PubMed:1668653 shows the existence of a second gene coding only for the short cytoplasmic isoform of PPDK.</text>
</comment>
<comment type="miscellaneous">
    <molecule>Isoform CYPPDKZM1</molecule>
    <text evidence="5 9">Produced by alternative promoter usage (PubMed:1668653). Cytoplasmic (PubMed:1668653). Initiator Met-1 is removed (PubMed:24710069).</text>
</comment>
<comment type="similarity">
    <text evidence="16">Belongs to the PEP-utilizing enzyme family.</text>
</comment>
<comment type="sequence caution" evidence="16">
    <conflict type="frameshift">
        <sequence resource="EMBL-CDS" id="AAA33495"/>
    </conflict>
</comment>
<sequence length="947" mass="102674">MAASVSRAICVQKPGSKCTRDREATSFARRSVAAPRPPHAKAAGVIRSDSGAGRGQHCSPLRAVVDAAPIQTTKKRVFHFGKGKSEGNKTMKELLGGKGANLAEMASIGLSVPPGFTVSTEACQQYQDAGCALPAGLWAEIVDGLQWVEEYMGATLGDPQRPLLLSVRSGAAVSMPGMMDTVLNLGLNDEVAAGLAAKSGERFAYDSFRRFLDMFGNVVMDIPRSLFEEKLEHMKESKGLKNDTDLTASDLKELVGQYKEVYLSAKGEPFPSDPKKQLELAVLAVFNSWESPRAKKYRSINQITGLRGTAVNVQCMVFGNMGNTSGTGVLFTRNPNTGEKKLYGEFLVNAQGEDVVAGIRTPEDLDAMKNLMPQAYDELVENCNILESHYKEMQDIEFTVQENRLWMLQCRTGKRTGKSAVKIAVDMVNEGLVEPRSAIKMVEPGHLDQLLHPQFENPSAYKDQVIATGLPASPGAAVGQVVFTAEDAEAWHSQGKAAILVRAETSPEDVGGMHAAVGILTERGGMTSHAAVVARWWGKCCVSGCSGIRVNDAEKLVTIGSHVLREGEWLSLNGSTGEVILGKQPLSPPALSGDLGTFMAWVDDVRKLKVLANADTPDDALTARNNGAQGIGLCRTEHMFFASDERIKAVRQMIMAPTLELRQQALDRLLTYQRSDFEGIFRAMDGLPVTIRLLDHPSYEFLPEGNIEDIVSELCAETGANQEDALARIEKLSEVNPMLGFRGCRLGISYPELTEMQARAIFEAAIAMTNQGVQVFPEIMVPLVGTPQELGHQVTLIRQVAEKVFANVGKTIGYKVGTMIEIPRAALVADEIAEQAEFFSFGTNDLTQMTFGYSRDDVGKFIPVHLAQGILQHDPFEVLDQRGVGELVKFATERGRKARPNLKVGICGEHGGEPSSVAFFAKAGLDFVSCSPFRVPIARLAAAQVLV</sequence>
<protein>
    <recommendedName>
        <fullName evidence="13">Pyruvate, phosphate dikinase 1, chloroplastic</fullName>
        <ecNumber evidence="2 6 11 12">2.7.9.1</ecNumber>
    </recommendedName>
    <alternativeName>
        <fullName>Pyruvate, orthophosphate dikinase 1</fullName>
    </alternativeName>
</protein>
<gene>
    <name evidence="13" type="primary">PPDK1</name>
    <name evidence="13" type="synonym">C4PPDKZM1</name>
    <name evidence="13" type="synonym">CYPPDKZM1</name>
    <name evidence="14" type="synonym">PPDK2</name>
</gene>